<proteinExistence type="evidence at protein level"/>
<organism>
    <name type="scientific">Thermotoga maritima (strain ATCC 43589 / DSM 3109 / JCM 10099 / NBRC 100826 / MSB8)</name>
    <dbReference type="NCBI Taxonomy" id="243274"/>
    <lineage>
        <taxon>Bacteria</taxon>
        <taxon>Thermotogati</taxon>
        <taxon>Thermotogota</taxon>
        <taxon>Thermotogae</taxon>
        <taxon>Thermotogales</taxon>
        <taxon>Thermotogaceae</taxon>
        <taxon>Thermotoga</taxon>
    </lineage>
</organism>
<keyword id="KW-0002">3D-structure</keyword>
<keyword id="KW-0067">ATP-binding</keyword>
<keyword id="KW-0963">Cytoplasm</keyword>
<keyword id="KW-0436">Ligase</keyword>
<keyword id="KW-0547">Nucleotide-binding</keyword>
<keyword id="KW-0658">Purine biosynthesis</keyword>
<keyword id="KW-1185">Reference proteome</keyword>
<protein>
    <recommendedName>
        <fullName evidence="1">Phosphoribosylformylglycinamidine synthase subunit PurS</fullName>
        <shortName evidence="1">FGAM synthase</shortName>
        <ecNumber evidence="1">6.3.5.3</ecNumber>
    </recommendedName>
    <alternativeName>
        <fullName evidence="1">Formylglycinamide ribonucleotide amidotransferase subunit III</fullName>
        <shortName evidence="1">FGAR amidotransferase III</shortName>
        <shortName evidence="1">FGAR-AT III</shortName>
    </alternativeName>
    <alternativeName>
        <fullName evidence="1">Phosphoribosylformylglycinamidine synthase subunit III</fullName>
    </alternativeName>
</protein>
<evidence type="ECO:0000255" key="1">
    <source>
        <dbReference type="HAMAP-Rule" id="MF_01926"/>
    </source>
</evidence>
<evidence type="ECO:0000269" key="2">
    <source>
    </source>
</evidence>
<evidence type="ECO:0000269" key="3">
    <source>
    </source>
</evidence>
<evidence type="ECO:0007829" key="4">
    <source>
        <dbReference type="PDB" id="1VQ3"/>
    </source>
</evidence>
<gene>
    <name evidence="1" type="primary">purS</name>
    <name type="ordered locus">TM_1244</name>
    <name type="ORF">THEMA_08115</name>
    <name type="ORF">Tmari_1249</name>
</gene>
<feature type="chain" id="PRO_0000430099" description="Phosphoribosylformylglycinamidine synthase subunit PurS">
    <location>
        <begin position="1"/>
        <end position="82"/>
    </location>
</feature>
<feature type="strand" evidence="4">
    <location>
        <begin position="3"/>
        <end position="12"/>
    </location>
</feature>
<feature type="helix" evidence="4">
    <location>
        <begin position="19"/>
        <end position="30"/>
    </location>
</feature>
<feature type="strand" evidence="4">
    <location>
        <begin position="36"/>
        <end position="50"/>
    </location>
</feature>
<feature type="helix" evidence="4">
    <location>
        <begin position="54"/>
        <end position="67"/>
    </location>
</feature>
<feature type="turn" evidence="4">
    <location>
        <begin position="72"/>
        <end position="74"/>
    </location>
</feature>
<feature type="strand" evidence="4">
    <location>
        <begin position="75"/>
        <end position="81"/>
    </location>
</feature>
<sequence length="82" mass="9639">MPLFKFAIDVQYRSNVRDPRGETIERVLREEKGLPVKKLRLGKSIHLEVEAENKEKAYEIVKKACEELLVNPVVEEYEVREL</sequence>
<reference key="1">
    <citation type="journal article" date="1999" name="Nature">
        <title>Evidence for lateral gene transfer between Archaea and Bacteria from genome sequence of Thermotoga maritima.</title>
        <authorList>
            <person name="Nelson K.E."/>
            <person name="Clayton R.A."/>
            <person name="Gill S.R."/>
            <person name="Gwinn M.L."/>
            <person name="Dodson R.J."/>
            <person name="Haft D.H."/>
            <person name="Hickey E.K."/>
            <person name="Peterson J.D."/>
            <person name="Nelson W.C."/>
            <person name="Ketchum K.A."/>
            <person name="McDonald L.A."/>
            <person name="Utterback T.R."/>
            <person name="Malek J.A."/>
            <person name="Linher K.D."/>
            <person name="Garrett M.M."/>
            <person name="Stewart A.M."/>
            <person name="Cotton M.D."/>
            <person name="Pratt M.S."/>
            <person name="Phillips C.A."/>
            <person name="Richardson D.L."/>
            <person name="Heidelberg J.F."/>
            <person name="Sutton G.G."/>
            <person name="Fleischmann R.D."/>
            <person name="Eisen J.A."/>
            <person name="White O."/>
            <person name="Salzberg S.L."/>
            <person name="Smith H.O."/>
            <person name="Venter J.C."/>
            <person name="Fraser C.M."/>
        </authorList>
    </citation>
    <scope>NUCLEOTIDE SEQUENCE [LARGE SCALE GENOMIC DNA]</scope>
    <source>
        <strain>ATCC 43589 / DSM 3109 / JCM 10099 / NBRC 100826 / MSB8</strain>
    </source>
</reference>
<reference key="2">
    <citation type="journal article" date="2013" name="PLoS Genet.">
        <title>The genome organization of Thermotoga maritima reflects its lifestyle.</title>
        <authorList>
            <person name="Latif H."/>
            <person name="Lerman J.A."/>
            <person name="Portnoy V.A."/>
            <person name="Tarasova Y."/>
            <person name="Nagarajan H."/>
            <person name="Schrimpe-Rutledge A.C."/>
            <person name="Smith R.D."/>
            <person name="Adkins J.N."/>
            <person name="Lee D.H."/>
            <person name="Qiu Y."/>
            <person name="Zengler K."/>
        </authorList>
    </citation>
    <scope>NUCLEOTIDE SEQUENCE [LARGE SCALE GENOMIC DNA]</scope>
    <source>
        <strain>ATCC 43589 / DSM 3109 / JCM 10099 / NBRC 100826 / MSB8</strain>
    </source>
</reference>
<reference key="3">
    <citation type="submission" date="2013-12" db="EMBL/GenBank/DDBJ databases">
        <authorList>
            <consortium name="DOE Joint Genome Institute"/>
            <person name="Noll K.M."/>
            <person name="Huntemann M."/>
            <person name="Han J."/>
            <person name="Chen A."/>
            <person name="Kyrpides N."/>
            <person name="Mavromatis K."/>
            <person name="Markowitz V."/>
            <person name="Palaniappan K."/>
            <person name="Ivanova N."/>
            <person name="Schaumberg A."/>
            <person name="Pati A."/>
            <person name="Liolios K."/>
            <person name="Nordberg H.P."/>
            <person name="Cantor M.N."/>
            <person name="Hua S.X."/>
            <person name="Woyke T."/>
        </authorList>
    </citation>
    <scope>NUCLEOTIDE SEQUENCE [LARGE SCALE GENOMIC DNA]</scope>
    <source>
        <strain>ATCC 43589 / DSM 3109 / JCM 10099 / NBRC 100826 / MSB8</strain>
    </source>
</reference>
<reference key="4">
    <citation type="journal article" date="2006" name="Proteins">
        <title>Crystal structure of phosphoribosylformyl-glycinamidine synthase II, PurS subunit (TM1244) from Thermotoga maritima at 1.90 A resolution.</title>
        <authorList>
            <person name="Mathews I.I."/>
            <person name="Krishna S.S."/>
            <person name="Schwarzenbacher R."/>
            <person name="McMullan D."/>
            <person name="Jaroszewski L."/>
            <person name="Miller M.D."/>
            <person name="Abdubek P."/>
            <person name="Agarwalla S."/>
            <person name="Ambing E."/>
            <person name="Axelrod H.L."/>
            <person name="Canaves J.M."/>
            <person name="Carlton D."/>
            <person name="Chiu H.J."/>
            <person name="Clayton T."/>
            <person name="DiDonato M."/>
            <person name="Duan L."/>
            <person name="Elsliger M.A."/>
            <person name="Grzechnik S.K."/>
            <person name="Hale J."/>
            <person name="Hampton E."/>
            <person name="Haugen J."/>
            <person name="Jin K.K."/>
            <person name="Klock H.E."/>
            <person name="Koesema E."/>
            <person name="Kovarik J.S."/>
            <person name="Kreusch A."/>
            <person name="Kuhn P."/>
            <person name="Levin I."/>
            <person name="Morse A.T."/>
            <person name="Nigoghossian E."/>
            <person name="Okach L."/>
            <person name="Oommachen S."/>
            <person name="Paulsen J."/>
            <person name="Quijano K."/>
            <person name="Reyes R."/>
            <person name="Rife C.L."/>
            <person name="Spraggon G."/>
            <person name="Stevens R.C."/>
            <person name="van den Bedem H."/>
            <person name="White A."/>
            <person name="Wolf G."/>
            <person name="Xu Q."/>
            <person name="Hodgson K.O."/>
            <person name="Wooley J."/>
            <person name="Deacon A.M."/>
            <person name="Godzik A."/>
            <person name="Lesley S.A."/>
            <person name="Wilson I.A."/>
        </authorList>
    </citation>
    <scope>X-RAY CRYSTALLOGRAPHY (1.90 ANGSTROMS)</scope>
    <scope>SUBUNIT</scope>
</reference>
<reference key="5">
    <citation type="journal article" date="2008" name="Biochemistry">
        <title>Formylglycinamide ribonucleotide amidotransferase from Thermotoga maritima: structural insights into complex formation.</title>
        <authorList>
            <person name="Morar M."/>
            <person name="Hoskins A.A."/>
            <person name="Stubbe J."/>
            <person name="Ealick S.E."/>
        </authorList>
    </citation>
    <scope>X-RAY CRYSTALLOGRAPHY (3.50 ANGSTROMS)</scope>
    <scope>FUNCTION</scope>
    <scope>CATALYTIC ACTIVITY</scope>
    <scope>SUBUNIT</scope>
</reference>
<name>PURS_THEMA</name>
<accession>Q9X0X1</accession>
<accession>G4FEA4</accession>
<comment type="function">
    <text evidence="1 3">Part of the phosphoribosylformylglycinamidine synthase complex involved in the purines biosynthetic pathway. Catalyzes the ATP-dependent conversion of formylglycinamide ribonucleotide (FGAR) and glutamine to yield formylglycinamidine ribonucleotide (FGAM) and glutamate. The FGAM synthase complex is composed of three subunits. PurQ produces an ammonia molecule by converting glutamine to glutamate. PurL transfers the ammonia molecule to FGAR to form FGAM in an ATP-dependent manner. PurS interacts with PurQ and PurL and is thought to assist in the transfer of the ammonia molecule from PurQ to PurL.</text>
</comment>
<comment type="catalytic activity">
    <reaction evidence="1 3">
        <text>N(2)-formyl-N(1)-(5-phospho-beta-D-ribosyl)glycinamide + L-glutamine + ATP + H2O = 2-formamido-N(1)-(5-O-phospho-beta-D-ribosyl)acetamidine + L-glutamate + ADP + phosphate + H(+)</text>
        <dbReference type="Rhea" id="RHEA:17129"/>
        <dbReference type="ChEBI" id="CHEBI:15377"/>
        <dbReference type="ChEBI" id="CHEBI:15378"/>
        <dbReference type="ChEBI" id="CHEBI:29985"/>
        <dbReference type="ChEBI" id="CHEBI:30616"/>
        <dbReference type="ChEBI" id="CHEBI:43474"/>
        <dbReference type="ChEBI" id="CHEBI:58359"/>
        <dbReference type="ChEBI" id="CHEBI:147286"/>
        <dbReference type="ChEBI" id="CHEBI:147287"/>
        <dbReference type="ChEBI" id="CHEBI:456216"/>
        <dbReference type="EC" id="6.3.5.3"/>
    </reaction>
</comment>
<comment type="pathway">
    <text evidence="1">Purine metabolism; IMP biosynthesis via de novo pathway; 5-amino-1-(5-phospho-D-ribosyl)imidazole from N(2)-formyl-N(1)-(5-phospho-D-ribosyl)glycinamide: step 1/2.</text>
</comment>
<comment type="subunit">
    <text evidence="2 3">Homodimer. Part of the FGAM synthase complex composed of 1 PurL, 1 PurQ and 2 PurS subunits.</text>
</comment>
<comment type="subcellular location">
    <subcellularLocation>
        <location evidence="1">Cytoplasm</location>
    </subcellularLocation>
</comment>
<comment type="similarity">
    <text evidence="1">Belongs to the PurS family.</text>
</comment>
<dbReference type="EC" id="6.3.5.3" evidence="1"/>
<dbReference type="EMBL" id="AE000512">
    <property type="protein sequence ID" value="AAD36319.1"/>
    <property type="molecule type" value="Genomic_DNA"/>
</dbReference>
<dbReference type="EMBL" id="CP004077">
    <property type="protein sequence ID" value="AGL50173.1"/>
    <property type="molecule type" value="Genomic_DNA"/>
</dbReference>
<dbReference type="EMBL" id="CP007013">
    <property type="protein sequence ID" value="AHD18851.1"/>
    <property type="molecule type" value="Genomic_DNA"/>
</dbReference>
<dbReference type="PIR" id="F72276">
    <property type="entry name" value="F72276"/>
</dbReference>
<dbReference type="RefSeq" id="NP_229049.1">
    <property type="nucleotide sequence ID" value="NC_000853.1"/>
</dbReference>
<dbReference type="RefSeq" id="WP_004080026.1">
    <property type="nucleotide sequence ID" value="NZ_CP011107.1"/>
</dbReference>
<dbReference type="PDB" id="1VQ3">
    <property type="method" value="X-ray"/>
    <property type="resolution" value="1.90 A"/>
    <property type="chains" value="A/B/C/D=1-82"/>
</dbReference>
<dbReference type="PDB" id="3D54">
    <property type="method" value="X-ray"/>
    <property type="resolution" value="3.50 A"/>
    <property type="chains" value="B/C/F/G/J/K=1-82"/>
</dbReference>
<dbReference type="PDBsum" id="1VQ3"/>
<dbReference type="PDBsum" id="3D54"/>
<dbReference type="SMR" id="Q9X0X1"/>
<dbReference type="FunCoup" id="Q9X0X1">
    <property type="interactions" value="49"/>
</dbReference>
<dbReference type="STRING" id="243274.TM_1244"/>
<dbReference type="PaxDb" id="243274-THEMA_08115"/>
<dbReference type="EnsemblBacteria" id="AAD36319">
    <property type="protein sequence ID" value="AAD36319"/>
    <property type="gene ID" value="TM_1244"/>
</dbReference>
<dbReference type="KEGG" id="tma:TM1244"/>
<dbReference type="KEGG" id="tmi:THEMA_08115"/>
<dbReference type="KEGG" id="tmm:Tmari_1249"/>
<dbReference type="KEGG" id="tmw:THMA_1269"/>
<dbReference type="PATRIC" id="fig|243274.17.peg.1247"/>
<dbReference type="eggNOG" id="COG1828">
    <property type="taxonomic scope" value="Bacteria"/>
</dbReference>
<dbReference type="InParanoid" id="Q9X0X1"/>
<dbReference type="OrthoDB" id="9799101at2"/>
<dbReference type="BRENDA" id="6.3.5.3">
    <property type="organism ID" value="6331"/>
</dbReference>
<dbReference type="UniPathway" id="UPA00074">
    <property type="reaction ID" value="UER00128"/>
</dbReference>
<dbReference type="EvolutionaryTrace" id="Q9X0X1"/>
<dbReference type="Proteomes" id="UP000008183">
    <property type="component" value="Chromosome"/>
</dbReference>
<dbReference type="GO" id="GO:0005737">
    <property type="term" value="C:cytoplasm"/>
    <property type="evidence" value="ECO:0007669"/>
    <property type="project" value="UniProtKB-SubCell"/>
</dbReference>
<dbReference type="GO" id="GO:0005524">
    <property type="term" value="F:ATP binding"/>
    <property type="evidence" value="ECO:0007669"/>
    <property type="project" value="UniProtKB-UniRule"/>
</dbReference>
<dbReference type="GO" id="GO:0004642">
    <property type="term" value="F:phosphoribosylformylglycinamidine synthase activity"/>
    <property type="evidence" value="ECO:0007669"/>
    <property type="project" value="UniProtKB-UniRule"/>
</dbReference>
<dbReference type="GO" id="GO:0006189">
    <property type="term" value="P:'de novo' IMP biosynthetic process"/>
    <property type="evidence" value="ECO:0007669"/>
    <property type="project" value="UniProtKB-UniRule"/>
</dbReference>
<dbReference type="Gene3D" id="3.30.1280.10">
    <property type="entry name" value="Phosphoribosylformylglycinamidine synthase subunit PurS"/>
    <property type="match status" value="1"/>
</dbReference>
<dbReference type="HAMAP" id="MF_01926">
    <property type="entry name" value="PurS"/>
    <property type="match status" value="1"/>
</dbReference>
<dbReference type="InterPro" id="IPR003850">
    <property type="entry name" value="PurS"/>
</dbReference>
<dbReference type="InterPro" id="IPR036604">
    <property type="entry name" value="PurS-like_sf"/>
</dbReference>
<dbReference type="NCBIfam" id="TIGR00302">
    <property type="entry name" value="phosphoribosylformylglycinamidine synthase subunit PurS"/>
    <property type="match status" value="1"/>
</dbReference>
<dbReference type="PANTHER" id="PTHR34696">
    <property type="entry name" value="PHOSPHORIBOSYLFORMYLGLYCINAMIDINE SYNTHASE SUBUNIT PURS"/>
    <property type="match status" value="1"/>
</dbReference>
<dbReference type="PANTHER" id="PTHR34696:SF1">
    <property type="entry name" value="PHOSPHORIBOSYLFORMYLGLYCINAMIDINE SYNTHASE SUBUNIT PURS"/>
    <property type="match status" value="1"/>
</dbReference>
<dbReference type="Pfam" id="PF02700">
    <property type="entry name" value="PurS"/>
    <property type="match status" value="1"/>
</dbReference>
<dbReference type="SUPFAM" id="SSF82697">
    <property type="entry name" value="PurS-like"/>
    <property type="match status" value="1"/>
</dbReference>